<feature type="chain" id="PRO_0000350654" description="Glycerol-1-phosphate dehydrogenase [NAD(P)+]">
    <location>
        <begin position="1"/>
        <end position="334"/>
    </location>
</feature>
<feature type="binding site" evidence="1">
    <location>
        <begin position="77"/>
        <end position="81"/>
    </location>
    <ligand>
        <name>NAD(+)</name>
        <dbReference type="ChEBI" id="CHEBI:57540"/>
    </ligand>
</feature>
<feature type="binding site" evidence="1">
    <location>
        <begin position="99"/>
        <end position="102"/>
    </location>
    <ligand>
        <name>NAD(+)</name>
        <dbReference type="ChEBI" id="CHEBI:57540"/>
    </ligand>
</feature>
<feature type="binding site" evidence="1">
    <location>
        <position position="104"/>
    </location>
    <ligand>
        <name>substrate</name>
    </ligand>
</feature>
<feature type="binding site" evidence="1">
    <location>
        <position position="108"/>
    </location>
    <ligand>
        <name>NAD(+)</name>
        <dbReference type="ChEBI" id="CHEBI:57540"/>
    </ligand>
</feature>
<feature type="binding site" evidence="1">
    <location>
        <position position="147"/>
    </location>
    <ligand>
        <name>substrate</name>
    </ligand>
</feature>
<feature type="binding site" evidence="1">
    <location>
        <position position="147"/>
    </location>
    <ligand>
        <name>Zn(2+)</name>
        <dbReference type="ChEBI" id="CHEBI:29105"/>
        <note>catalytic</note>
    </ligand>
</feature>
<feature type="binding site" evidence="1">
    <location>
        <position position="225"/>
    </location>
    <ligand>
        <name>Zn(2+)</name>
        <dbReference type="ChEBI" id="CHEBI:29105"/>
        <note>catalytic</note>
    </ligand>
</feature>
<feature type="binding site" evidence="1">
    <location>
        <position position="229"/>
    </location>
    <ligand>
        <name>substrate</name>
    </ligand>
</feature>
<feature type="binding site" evidence="1">
    <location>
        <position position="246"/>
    </location>
    <ligand>
        <name>Zn(2+)</name>
        <dbReference type="ChEBI" id="CHEBI:29105"/>
        <note>catalytic</note>
    </ligand>
</feature>
<sequence>MIVIPRYTIIKEKASGRIPEILDNLNLKNPLVITGKNTKKYNKDFDFIYYDEIETSDLENIKNYAKDYDSIIGIGGGRPIDIGKLIAHKSKKPFLSVPTTASNDGIASPIVSLTQPSYMTEAPIAIIADIDIIKKSPKKLLSAGMGDIVSNITAVLDWELGKIEKSEKYSDSSGIFSKTIAIELMDYVLNSNLEEYPKKLVKALIGSGISIAIAHSSRPASGSEHLFSHALDTMKEKYDIDTTSLHGEQCGVGTLAIAQIYLEEGKLEVETFEMLKNSLKAVDAPVTAEQLGFDEEIIIEALSSANTLRKRHTILRNGISKEKAREILEKSEII</sequence>
<protein>
    <recommendedName>
        <fullName evidence="1">Glycerol-1-phosphate dehydrogenase [NAD(P)+]</fullName>
        <shortName evidence="1">G1P dehydrogenase</shortName>
        <shortName evidence="1">G1PDH</shortName>
        <ecNumber evidence="1">1.1.1.261</ecNumber>
    </recommendedName>
    <alternativeName>
        <fullName evidence="1">Enantiomeric glycerophosphate synthase</fullName>
    </alternativeName>
    <alternativeName>
        <fullName evidence="1">sn-glycerol-1-phosphate dehydrogenase</fullName>
    </alternativeName>
</protein>
<keyword id="KW-0963">Cytoplasm</keyword>
<keyword id="KW-0444">Lipid biosynthesis</keyword>
<keyword id="KW-0443">Lipid metabolism</keyword>
<keyword id="KW-0479">Metal-binding</keyword>
<keyword id="KW-0520">NAD</keyword>
<keyword id="KW-0521">NADP</keyword>
<keyword id="KW-0560">Oxidoreductase</keyword>
<keyword id="KW-0594">Phospholipid biosynthesis</keyword>
<keyword id="KW-1208">Phospholipid metabolism</keyword>
<keyword id="KW-0862">Zinc</keyword>
<organism>
    <name type="scientific">Methanococcus maripaludis (strain C6 / ATCC BAA-1332)</name>
    <dbReference type="NCBI Taxonomy" id="444158"/>
    <lineage>
        <taxon>Archaea</taxon>
        <taxon>Methanobacteriati</taxon>
        <taxon>Methanobacteriota</taxon>
        <taxon>Methanomada group</taxon>
        <taxon>Methanococci</taxon>
        <taxon>Methanococcales</taxon>
        <taxon>Methanococcaceae</taxon>
        <taxon>Methanococcus</taxon>
    </lineage>
</organism>
<proteinExistence type="inferred from homology"/>
<gene>
    <name evidence="1" type="primary">egsA</name>
    <name type="ordered locus">MmarC6_0730</name>
</gene>
<name>G1PDH_METM6</name>
<reference key="1">
    <citation type="submission" date="2007-10" db="EMBL/GenBank/DDBJ databases">
        <title>Complete sequence of Methanococcus maripaludis C6.</title>
        <authorList>
            <consortium name="US DOE Joint Genome Institute"/>
            <person name="Copeland A."/>
            <person name="Lucas S."/>
            <person name="Lapidus A."/>
            <person name="Barry K."/>
            <person name="Glavina del Rio T."/>
            <person name="Dalin E."/>
            <person name="Tice H."/>
            <person name="Pitluck S."/>
            <person name="Clum A."/>
            <person name="Schmutz J."/>
            <person name="Larimer F."/>
            <person name="Land M."/>
            <person name="Hauser L."/>
            <person name="Kyrpides N."/>
            <person name="Mikhailova N."/>
            <person name="Sieprawska-Lupa M."/>
            <person name="Whitman W.B."/>
            <person name="Richardson P."/>
        </authorList>
    </citation>
    <scope>NUCLEOTIDE SEQUENCE [LARGE SCALE GENOMIC DNA]</scope>
    <source>
        <strain>C6 / ATCC BAA-1332</strain>
    </source>
</reference>
<dbReference type="EC" id="1.1.1.261" evidence="1"/>
<dbReference type="EMBL" id="CP000867">
    <property type="protein sequence ID" value="ABX01547.1"/>
    <property type="molecule type" value="Genomic_DNA"/>
</dbReference>
<dbReference type="SMR" id="A9A874"/>
<dbReference type="STRING" id="444158.MmarC6_0730"/>
<dbReference type="KEGG" id="mmx:MmarC6_0730"/>
<dbReference type="eggNOG" id="arCOG00982">
    <property type="taxonomic scope" value="Archaea"/>
</dbReference>
<dbReference type="HOGENOM" id="CLU_038362_0_0_2"/>
<dbReference type="OrthoDB" id="8656at2157"/>
<dbReference type="PhylomeDB" id="A9A874"/>
<dbReference type="UniPathway" id="UPA00940"/>
<dbReference type="GO" id="GO:0005737">
    <property type="term" value="C:cytoplasm"/>
    <property type="evidence" value="ECO:0007669"/>
    <property type="project" value="UniProtKB-SubCell"/>
</dbReference>
<dbReference type="GO" id="GO:0106357">
    <property type="term" value="F:glycerol-1-phosphate dehydrogenase (NAD+) activity"/>
    <property type="evidence" value="ECO:0007669"/>
    <property type="project" value="RHEA"/>
</dbReference>
<dbReference type="GO" id="GO:0106358">
    <property type="term" value="F:glycerol-1-phosphate dehydrogenase (NADP+) activity"/>
    <property type="evidence" value="ECO:0007669"/>
    <property type="project" value="RHEA"/>
</dbReference>
<dbReference type="GO" id="GO:0046872">
    <property type="term" value="F:metal ion binding"/>
    <property type="evidence" value="ECO:0007669"/>
    <property type="project" value="UniProtKB-KW"/>
</dbReference>
<dbReference type="GO" id="GO:0006650">
    <property type="term" value="P:glycerophospholipid metabolic process"/>
    <property type="evidence" value="ECO:0007669"/>
    <property type="project" value="UniProtKB-UniRule"/>
</dbReference>
<dbReference type="GO" id="GO:0008654">
    <property type="term" value="P:phospholipid biosynthetic process"/>
    <property type="evidence" value="ECO:0007669"/>
    <property type="project" value="UniProtKB-KW"/>
</dbReference>
<dbReference type="Gene3D" id="3.40.50.1970">
    <property type="match status" value="1"/>
</dbReference>
<dbReference type="Gene3D" id="1.20.1090.10">
    <property type="entry name" value="Dehydroquinate synthase-like - alpha domain"/>
    <property type="match status" value="1"/>
</dbReference>
<dbReference type="HAMAP" id="MF_00497_A">
    <property type="entry name" value="G1P_dehydrogenase_A"/>
    <property type="match status" value="1"/>
</dbReference>
<dbReference type="InterPro" id="IPR023002">
    <property type="entry name" value="G1P_dehydrogenase_arc"/>
</dbReference>
<dbReference type="InterPro" id="IPR032837">
    <property type="entry name" value="G1PDH"/>
</dbReference>
<dbReference type="InterPro" id="IPR016205">
    <property type="entry name" value="Glycerol_DH"/>
</dbReference>
<dbReference type="PANTHER" id="PTHR43616">
    <property type="entry name" value="GLYCEROL DEHYDROGENASE"/>
    <property type="match status" value="1"/>
</dbReference>
<dbReference type="PANTHER" id="PTHR43616:SF5">
    <property type="entry name" value="GLYCEROL DEHYDROGENASE 1"/>
    <property type="match status" value="1"/>
</dbReference>
<dbReference type="Pfam" id="PF13685">
    <property type="entry name" value="Fe-ADH_2"/>
    <property type="match status" value="1"/>
</dbReference>
<dbReference type="PIRSF" id="PIRSF000112">
    <property type="entry name" value="Glycerol_dehydrogenase"/>
    <property type="match status" value="1"/>
</dbReference>
<dbReference type="SUPFAM" id="SSF56796">
    <property type="entry name" value="Dehydroquinate synthase-like"/>
    <property type="match status" value="1"/>
</dbReference>
<comment type="function">
    <text evidence="1">Catalyzes the NAD(P)H-dependent reduction of dihydroxyacetonephosphate (DHAP or glycerone phosphate) to glycerol 1-phosphate (G1P). The G1P thus generated is used as the glycerophosphate backbone of phospholipids in the cellular membranes of Archaea.</text>
</comment>
<comment type="catalytic activity">
    <reaction evidence="1">
        <text>sn-glycerol 1-phosphate + NAD(+) = dihydroxyacetone phosphate + NADH + H(+)</text>
        <dbReference type="Rhea" id="RHEA:21412"/>
        <dbReference type="ChEBI" id="CHEBI:15378"/>
        <dbReference type="ChEBI" id="CHEBI:57540"/>
        <dbReference type="ChEBI" id="CHEBI:57642"/>
        <dbReference type="ChEBI" id="CHEBI:57685"/>
        <dbReference type="ChEBI" id="CHEBI:57945"/>
        <dbReference type="EC" id="1.1.1.261"/>
    </reaction>
</comment>
<comment type="catalytic activity">
    <reaction evidence="1">
        <text>sn-glycerol 1-phosphate + NADP(+) = dihydroxyacetone phosphate + NADPH + H(+)</text>
        <dbReference type="Rhea" id="RHEA:21416"/>
        <dbReference type="ChEBI" id="CHEBI:15378"/>
        <dbReference type="ChEBI" id="CHEBI:57642"/>
        <dbReference type="ChEBI" id="CHEBI:57685"/>
        <dbReference type="ChEBI" id="CHEBI:57783"/>
        <dbReference type="ChEBI" id="CHEBI:58349"/>
        <dbReference type="EC" id="1.1.1.261"/>
    </reaction>
</comment>
<comment type="cofactor">
    <cofactor evidence="1">
        <name>Zn(2+)</name>
        <dbReference type="ChEBI" id="CHEBI:29105"/>
    </cofactor>
    <text evidence="1">Binds 1 zinc ion per subunit.</text>
</comment>
<comment type="pathway">
    <text evidence="1">Membrane lipid metabolism; glycerophospholipid metabolism.</text>
</comment>
<comment type="subcellular location">
    <subcellularLocation>
        <location evidence="1">Cytoplasm</location>
    </subcellularLocation>
</comment>
<comment type="similarity">
    <text evidence="1">Belongs to the glycerol-1-phosphate dehydrogenase family.</text>
</comment>
<evidence type="ECO:0000255" key="1">
    <source>
        <dbReference type="HAMAP-Rule" id="MF_00497"/>
    </source>
</evidence>
<accession>A9A874</accession>